<keyword id="KW-0489">Methyltransferase</keyword>
<keyword id="KW-0949">S-adenosyl-L-methionine</keyword>
<keyword id="KW-0808">Transferase</keyword>
<keyword id="KW-0831">Ubiquinone biosynthesis</keyword>
<protein>
    <recommendedName>
        <fullName evidence="1">Ubiquinone biosynthesis O-methyltransferase</fullName>
    </recommendedName>
    <alternativeName>
        <fullName evidence="1">2-polyprenyl-6-hydroxyphenol methylase</fullName>
        <ecNumber evidence="1">2.1.1.222</ecNumber>
    </alternativeName>
    <alternativeName>
        <fullName evidence="1">3-demethylubiquinone 3-O-methyltransferase</fullName>
        <ecNumber evidence="1">2.1.1.64</ecNumber>
    </alternativeName>
</protein>
<accession>A9KGL7</accession>
<reference key="1">
    <citation type="journal article" date="2009" name="Infect. Immun.">
        <title>Comparative genomics reveal extensive transposon-mediated genomic plasticity and diversity among potential effector proteins within the genus Coxiella.</title>
        <authorList>
            <person name="Beare P.A."/>
            <person name="Unsworth N."/>
            <person name="Andoh M."/>
            <person name="Voth D.E."/>
            <person name="Omsland A."/>
            <person name="Gilk S.D."/>
            <person name="Williams K.P."/>
            <person name="Sobral B.W."/>
            <person name="Kupko J.J. III"/>
            <person name="Porcella S.F."/>
            <person name="Samuel J.E."/>
            <person name="Heinzen R.A."/>
        </authorList>
    </citation>
    <scope>NUCLEOTIDE SEQUENCE [LARGE SCALE GENOMIC DNA]</scope>
    <source>
        <strain>Dugway 5J108-111</strain>
    </source>
</reference>
<feature type="chain" id="PRO_1000081217" description="Ubiquinone biosynthesis O-methyltransferase">
    <location>
        <begin position="1"/>
        <end position="234"/>
    </location>
</feature>
<feature type="binding site" evidence="1">
    <location>
        <position position="40"/>
    </location>
    <ligand>
        <name>S-adenosyl-L-methionine</name>
        <dbReference type="ChEBI" id="CHEBI:59789"/>
    </ligand>
</feature>
<feature type="binding site" evidence="1">
    <location>
        <position position="59"/>
    </location>
    <ligand>
        <name>S-adenosyl-L-methionine</name>
        <dbReference type="ChEBI" id="CHEBI:59789"/>
    </ligand>
</feature>
<feature type="binding site" evidence="1">
    <location>
        <position position="80"/>
    </location>
    <ligand>
        <name>S-adenosyl-L-methionine</name>
        <dbReference type="ChEBI" id="CHEBI:59789"/>
    </ligand>
</feature>
<feature type="binding site" evidence="1">
    <location>
        <position position="123"/>
    </location>
    <ligand>
        <name>S-adenosyl-L-methionine</name>
        <dbReference type="ChEBI" id="CHEBI:59789"/>
    </ligand>
</feature>
<sequence>MTPSEQNIDKEELAKFSDLAQDWWNPAGKMKPLHLINPVRLKYIEQQITLKGKHVLDVGCGGGLLSEALAKHGAIVTGVDMSESLIDVAKNHAEQQQLNINYQCQDIEILTKDAQRFDIITCMELLEHVPDPQRMIKNCAALIKPGGKLFFSTINRNFKAYLYTIVGAEYVFNLLPKGTHDYAQFIHPSELTQWAESGGLRLLDITGIHYHPLKNEFDLSRDVSVNYLACFTHE</sequence>
<organism>
    <name type="scientific">Coxiella burnetii (strain Dugway 5J108-111)</name>
    <dbReference type="NCBI Taxonomy" id="434922"/>
    <lineage>
        <taxon>Bacteria</taxon>
        <taxon>Pseudomonadati</taxon>
        <taxon>Pseudomonadota</taxon>
        <taxon>Gammaproteobacteria</taxon>
        <taxon>Legionellales</taxon>
        <taxon>Coxiellaceae</taxon>
        <taxon>Coxiella</taxon>
    </lineage>
</organism>
<dbReference type="EC" id="2.1.1.222" evidence="1"/>
<dbReference type="EC" id="2.1.1.64" evidence="1"/>
<dbReference type="EMBL" id="CP000733">
    <property type="protein sequence ID" value="ABS77540.2"/>
    <property type="status" value="ALT_INIT"/>
    <property type="molecule type" value="Genomic_DNA"/>
</dbReference>
<dbReference type="RefSeq" id="WP_043880948.1">
    <property type="nucleotide sequence ID" value="NC_009727.1"/>
</dbReference>
<dbReference type="SMR" id="A9KGL7"/>
<dbReference type="KEGG" id="cbd:CBUD_1729"/>
<dbReference type="HOGENOM" id="CLU_042432_5_0_6"/>
<dbReference type="UniPathway" id="UPA00232"/>
<dbReference type="Proteomes" id="UP000008555">
    <property type="component" value="Chromosome"/>
</dbReference>
<dbReference type="GO" id="GO:0102208">
    <property type="term" value="F:2-polyprenyl-6-hydroxyphenol methylase activity"/>
    <property type="evidence" value="ECO:0007669"/>
    <property type="project" value="UniProtKB-EC"/>
</dbReference>
<dbReference type="GO" id="GO:0061542">
    <property type="term" value="F:3-demethylubiquinol 3-O-methyltransferase activity"/>
    <property type="evidence" value="ECO:0007669"/>
    <property type="project" value="UniProtKB-UniRule"/>
</dbReference>
<dbReference type="GO" id="GO:0010420">
    <property type="term" value="F:polyprenyldihydroxybenzoate methyltransferase activity"/>
    <property type="evidence" value="ECO:0007669"/>
    <property type="project" value="InterPro"/>
</dbReference>
<dbReference type="GO" id="GO:0032259">
    <property type="term" value="P:methylation"/>
    <property type="evidence" value="ECO:0007669"/>
    <property type="project" value="UniProtKB-KW"/>
</dbReference>
<dbReference type="CDD" id="cd02440">
    <property type="entry name" value="AdoMet_MTases"/>
    <property type="match status" value="1"/>
</dbReference>
<dbReference type="FunFam" id="3.40.50.150:FF:000028">
    <property type="entry name" value="Ubiquinone biosynthesis O-methyltransferase"/>
    <property type="match status" value="1"/>
</dbReference>
<dbReference type="Gene3D" id="3.40.50.150">
    <property type="entry name" value="Vaccinia Virus protein VP39"/>
    <property type="match status" value="1"/>
</dbReference>
<dbReference type="HAMAP" id="MF_00472">
    <property type="entry name" value="UbiG"/>
    <property type="match status" value="1"/>
</dbReference>
<dbReference type="InterPro" id="IPR029063">
    <property type="entry name" value="SAM-dependent_MTases_sf"/>
</dbReference>
<dbReference type="InterPro" id="IPR010233">
    <property type="entry name" value="UbiG_MeTrfase"/>
</dbReference>
<dbReference type="NCBIfam" id="TIGR01983">
    <property type="entry name" value="UbiG"/>
    <property type="match status" value="1"/>
</dbReference>
<dbReference type="PANTHER" id="PTHR43464">
    <property type="entry name" value="METHYLTRANSFERASE"/>
    <property type="match status" value="1"/>
</dbReference>
<dbReference type="PANTHER" id="PTHR43464:SF19">
    <property type="entry name" value="UBIQUINONE BIOSYNTHESIS O-METHYLTRANSFERASE, MITOCHONDRIAL"/>
    <property type="match status" value="1"/>
</dbReference>
<dbReference type="Pfam" id="PF13489">
    <property type="entry name" value="Methyltransf_23"/>
    <property type="match status" value="1"/>
</dbReference>
<dbReference type="SUPFAM" id="SSF53335">
    <property type="entry name" value="S-adenosyl-L-methionine-dependent methyltransferases"/>
    <property type="match status" value="1"/>
</dbReference>
<proteinExistence type="inferred from homology"/>
<gene>
    <name evidence="1" type="primary">ubiG</name>
    <name type="ordered locus">CBUD_1729</name>
</gene>
<evidence type="ECO:0000255" key="1">
    <source>
        <dbReference type="HAMAP-Rule" id="MF_00472"/>
    </source>
</evidence>
<evidence type="ECO:0000305" key="2"/>
<name>UBIG_COXBN</name>
<comment type="function">
    <text evidence="1">O-methyltransferase that catalyzes the 2 O-methylation steps in the ubiquinone biosynthetic pathway.</text>
</comment>
<comment type="catalytic activity">
    <reaction evidence="1">
        <text>a 3-demethylubiquinol + S-adenosyl-L-methionine = a ubiquinol + S-adenosyl-L-homocysteine + H(+)</text>
        <dbReference type="Rhea" id="RHEA:44380"/>
        <dbReference type="Rhea" id="RHEA-COMP:9566"/>
        <dbReference type="Rhea" id="RHEA-COMP:10914"/>
        <dbReference type="ChEBI" id="CHEBI:15378"/>
        <dbReference type="ChEBI" id="CHEBI:17976"/>
        <dbReference type="ChEBI" id="CHEBI:57856"/>
        <dbReference type="ChEBI" id="CHEBI:59789"/>
        <dbReference type="ChEBI" id="CHEBI:84422"/>
        <dbReference type="EC" id="2.1.1.64"/>
    </reaction>
</comment>
<comment type="catalytic activity">
    <reaction evidence="1">
        <text>a 3-(all-trans-polyprenyl)benzene-1,2-diol + S-adenosyl-L-methionine = a 2-methoxy-6-(all-trans-polyprenyl)phenol + S-adenosyl-L-homocysteine + H(+)</text>
        <dbReference type="Rhea" id="RHEA:31411"/>
        <dbReference type="Rhea" id="RHEA-COMP:9550"/>
        <dbReference type="Rhea" id="RHEA-COMP:9551"/>
        <dbReference type="ChEBI" id="CHEBI:15378"/>
        <dbReference type="ChEBI" id="CHEBI:57856"/>
        <dbReference type="ChEBI" id="CHEBI:59789"/>
        <dbReference type="ChEBI" id="CHEBI:62729"/>
        <dbReference type="ChEBI" id="CHEBI:62731"/>
        <dbReference type="EC" id="2.1.1.222"/>
    </reaction>
</comment>
<comment type="pathway">
    <text evidence="1">Cofactor biosynthesis; ubiquinone biosynthesis.</text>
</comment>
<comment type="similarity">
    <text evidence="1">Belongs to the methyltransferase superfamily. UbiG/COQ3 family.</text>
</comment>
<comment type="sequence caution" evidence="2">
    <conflict type="erroneous initiation">
        <sequence resource="EMBL-CDS" id="ABS77540"/>
    </conflict>
</comment>